<comment type="function">
    <text evidence="1">Inhibits all the catalytic activities of DNA gyrase by preventing its interaction with DNA. Acts by binding directly to the C-terminal domain of GyrB, which probably disrupts DNA binding by the gyrase.</text>
</comment>
<comment type="cofactor">
    <cofactor evidence="1">
        <name>Zn(2+)</name>
        <dbReference type="ChEBI" id="CHEBI:29105"/>
    </cofactor>
    <text evidence="1">Binds 1 zinc ion.</text>
</comment>
<comment type="subunit">
    <text evidence="1">Interacts with GyrB.</text>
</comment>
<comment type="similarity">
    <text evidence="1">Belongs to the DNA gyrase inhibitor YacG family.</text>
</comment>
<reference key="1">
    <citation type="journal article" date="2004" name="Nat. Genet.">
        <title>Evidence in the Legionella pneumophila genome for exploitation of host cell functions and high genome plasticity.</title>
        <authorList>
            <person name="Cazalet C."/>
            <person name="Rusniok C."/>
            <person name="Brueggemann H."/>
            <person name="Zidane N."/>
            <person name="Magnier A."/>
            <person name="Ma L."/>
            <person name="Tichit M."/>
            <person name="Jarraud S."/>
            <person name="Bouchier C."/>
            <person name="Vandenesch F."/>
            <person name="Kunst F."/>
            <person name="Etienne J."/>
            <person name="Glaser P."/>
            <person name="Buchrieser C."/>
        </authorList>
    </citation>
    <scope>NUCLEOTIDE SEQUENCE [LARGE SCALE GENOMIC DNA]</scope>
    <source>
        <strain>Paris</strain>
    </source>
</reference>
<protein>
    <recommendedName>
        <fullName evidence="1">DNA gyrase inhibitor YacG</fullName>
    </recommendedName>
</protein>
<evidence type="ECO:0000255" key="1">
    <source>
        <dbReference type="HAMAP-Rule" id="MF_00649"/>
    </source>
</evidence>
<evidence type="ECO:0000256" key="2">
    <source>
        <dbReference type="SAM" id="MobiDB-lite"/>
    </source>
</evidence>
<name>YACG_LEGPA</name>
<keyword id="KW-0479">Metal-binding</keyword>
<keyword id="KW-0862">Zinc</keyword>
<gene>
    <name evidence="1" type="primary">yacG</name>
    <name type="ordered locus">lpp0275</name>
</gene>
<proteinExistence type="inferred from homology"/>
<feature type="chain" id="PRO_0000211703" description="DNA gyrase inhibitor YacG">
    <location>
        <begin position="1"/>
        <end position="70"/>
    </location>
</feature>
<feature type="region of interest" description="Disordered" evidence="2">
    <location>
        <begin position="43"/>
        <end position="70"/>
    </location>
</feature>
<feature type="binding site" evidence="1">
    <location>
        <position position="9"/>
    </location>
    <ligand>
        <name>Zn(2+)</name>
        <dbReference type="ChEBI" id="CHEBI:29105"/>
    </ligand>
</feature>
<feature type="binding site" evidence="1">
    <location>
        <position position="12"/>
    </location>
    <ligand>
        <name>Zn(2+)</name>
        <dbReference type="ChEBI" id="CHEBI:29105"/>
    </ligand>
</feature>
<feature type="binding site" evidence="1">
    <location>
        <position position="28"/>
    </location>
    <ligand>
        <name>Zn(2+)</name>
        <dbReference type="ChEBI" id="CHEBI:29105"/>
    </ligand>
</feature>
<feature type="binding site" evidence="1">
    <location>
        <position position="32"/>
    </location>
    <ligand>
        <name>Zn(2+)</name>
        <dbReference type="ChEBI" id="CHEBI:29105"/>
    </ligand>
</feature>
<organism>
    <name type="scientific">Legionella pneumophila (strain Paris)</name>
    <dbReference type="NCBI Taxonomy" id="297246"/>
    <lineage>
        <taxon>Bacteria</taxon>
        <taxon>Pseudomonadati</taxon>
        <taxon>Pseudomonadota</taxon>
        <taxon>Gammaproteobacteria</taxon>
        <taxon>Legionellales</taxon>
        <taxon>Legionellaceae</taxon>
        <taxon>Legionella</taxon>
    </lineage>
</organism>
<dbReference type="EMBL" id="CR628336">
    <property type="protein sequence ID" value="CAH11423.1"/>
    <property type="molecule type" value="Genomic_DNA"/>
</dbReference>
<dbReference type="RefSeq" id="WP_011212901.1">
    <property type="nucleotide sequence ID" value="NC_006368.1"/>
</dbReference>
<dbReference type="SMR" id="Q5X8H6"/>
<dbReference type="KEGG" id="lpp:lpp0275"/>
<dbReference type="LegioList" id="lpp0275"/>
<dbReference type="HOGENOM" id="CLU_178280_1_0_6"/>
<dbReference type="GO" id="GO:0008657">
    <property type="term" value="F:DNA topoisomerase type II (double strand cut, ATP-hydrolyzing) inhibitor activity"/>
    <property type="evidence" value="ECO:0007669"/>
    <property type="project" value="UniProtKB-UniRule"/>
</dbReference>
<dbReference type="GO" id="GO:0008270">
    <property type="term" value="F:zinc ion binding"/>
    <property type="evidence" value="ECO:0007669"/>
    <property type="project" value="UniProtKB-UniRule"/>
</dbReference>
<dbReference type="GO" id="GO:0006355">
    <property type="term" value="P:regulation of DNA-templated transcription"/>
    <property type="evidence" value="ECO:0007669"/>
    <property type="project" value="InterPro"/>
</dbReference>
<dbReference type="Gene3D" id="3.30.50.10">
    <property type="entry name" value="Erythroid Transcription Factor GATA-1, subunit A"/>
    <property type="match status" value="1"/>
</dbReference>
<dbReference type="HAMAP" id="MF_00649">
    <property type="entry name" value="DNA_gyrase_inhibitor_YacG"/>
    <property type="match status" value="1"/>
</dbReference>
<dbReference type="InterPro" id="IPR005584">
    <property type="entry name" value="DNA_gyrase_inhibitor_YacG"/>
</dbReference>
<dbReference type="InterPro" id="IPR013088">
    <property type="entry name" value="Znf_NHR/GATA"/>
</dbReference>
<dbReference type="NCBIfam" id="NF001638">
    <property type="entry name" value="PRK00418.1"/>
    <property type="match status" value="1"/>
</dbReference>
<dbReference type="PANTHER" id="PTHR36150">
    <property type="entry name" value="DNA GYRASE INHIBITOR YACG"/>
    <property type="match status" value="1"/>
</dbReference>
<dbReference type="PANTHER" id="PTHR36150:SF1">
    <property type="entry name" value="DNA GYRASE INHIBITOR YACG"/>
    <property type="match status" value="1"/>
</dbReference>
<dbReference type="Pfam" id="PF03884">
    <property type="entry name" value="YacG"/>
    <property type="match status" value="1"/>
</dbReference>
<dbReference type="SUPFAM" id="SSF57716">
    <property type="entry name" value="Glucocorticoid receptor-like (DNA-binding domain)"/>
    <property type="match status" value="1"/>
</dbReference>
<sequence>MNNQQKIKCPICGKQNTWSPDNQFRPFCSERCKLIDLGEWASESRKIPGSSIDPESIVTSNNKQDNEDEQ</sequence>
<accession>Q5X8H6</accession>